<dbReference type="EMBL" id="AB025606">
    <property type="protein sequence ID" value="BAA98090.1"/>
    <property type="status" value="ALT_SEQ"/>
    <property type="molecule type" value="Genomic_DNA"/>
</dbReference>
<dbReference type="EMBL" id="CP002688">
    <property type="protein sequence ID" value="AED96253.1"/>
    <property type="molecule type" value="Genomic_DNA"/>
</dbReference>
<dbReference type="RefSeq" id="NP_200084.2">
    <property type="nucleotide sequence ID" value="NM_124650.3"/>
</dbReference>
<dbReference type="SMR" id="F4KHL6"/>
<dbReference type="STRING" id="3702.F4KHL6"/>
<dbReference type="PaxDb" id="3702-AT5G52720.1"/>
<dbReference type="EnsemblPlants" id="AT5G52720.1">
    <property type="protein sequence ID" value="AT5G52720.1"/>
    <property type="gene ID" value="AT5G52720"/>
</dbReference>
<dbReference type="GeneID" id="835349"/>
<dbReference type="Gramene" id="AT5G52720.1">
    <property type="protein sequence ID" value="AT5G52720.1"/>
    <property type="gene ID" value="AT5G52720"/>
</dbReference>
<dbReference type="KEGG" id="ath:AT5G52720"/>
<dbReference type="Araport" id="AT5G52720"/>
<dbReference type="TAIR" id="AT5G52720"/>
<dbReference type="HOGENOM" id="CLU_2267473_0_0_1"/>
<dbReference type="InParanoid" id="F4KHL6"/>
<dbReference type="PRO" id="PR:F4KHL6"/>
<dbReference type="Proteomes" id="UP000006548">
    <property type="component" value="Chromosome 5"/>
</dbReference>
<dbReference type="ExpressionAtlas" id="F4KHL6">
    <property type="expression patterns" value="baseline and differential"/>
</dbReference>
<dbReference type="GO" id="GO:0046872">
    <property type="term" value="F:metal ion binding"/>
    <property type="evidence" value="ECO:0007669"/>
    <property type="project" value="UniProtKB-KW"/>
</dbReference>
<dbReference type="Gene3D" id="3.30.70.100">
    <property type="match status" value="1"/>
</dbReference>
<dbReference type="InterPro" id="IPR051863">
    <property type="entry name" value="HIPP"/>
</dbReference>
<dbReference type="InterPro" id="IPR006121">
    <property type="entry name" value="HMA_dom"/>
</dbReference>
<dbReference type="PANTHER" id="PTHR45811">
    <property type="entry name" value="COPPER TRANSPORT PROTEIN FAMILY-RELATED"/>
    <property type="match status" value="1"/>
</dbReference>
<dbReference type="PANTHER" id="PTHR45811:SF16">
    <property type="entry name" value="COPPER TRANSPORT PROTEIN FAMILY-RELATED"/>
    <property type="match status" value="1"/>
</dbReference>
<dbReference type="PROSITE" id="PS50846">
    <property type="entry name" value="HMA_2"/>
    <property type="match status" value="1"/>
</dbReference>
<organism evidence="11">
    <name type="scientific">Arabidopsis thaliana</name>
    <name type="common">Mouse-ear cress</name>
    <dbReference type="NCBI Taxonomy" id="3702"/>
    <lineage>
        <taxon>Eukaryota</taxon>
        <taxon>Viridiplantae</taxon>
        <taxon>Streptophyta</taxon>
        <taxon>Embryophyta</taxon>
        <taxon>Tracheophyta</taxon>
        <taxon>Spermatophyta</taxon>
        <taxon>Magnoliopsida</taxon>
        <taxon>eudicotyledons</taxon>
        <taxon>Gunneridae</taxon>
        <taxon>Pentapetalae</taxon>
        <taxon>rosids</taxon>
        <taxon>malvids</taxon>
        <taxon>Brassicales</taxon>
        <taxon>Brassicaceae</taxon>
        <taxon>Camelineae</taxon>
        <taxon>Arabidopsis</taxon>
    </lineage>
</organism>
<keyword id="KW-0449">Lipoprotein</keyword>
<keyword id="KW-0479">Metal-binding</keyword>
<keyword id="KW-0488">Methylation</keyword>
<keyword id="KW-0636">Prenylation</keyword>
<keyword id="KW-1185">Reference proteome</keyword>
<accession>F4KHL6</accession>
<accession>Q9LTE5</accession>
<sequence>MQETVVFEWGSFDVRTKEKAMKVVCEFPGVTVIDVKERGKLKVTGQFDKFIMTKKLKKICDYVDITAVGPEGQPAQNRNPVKKPEPKVIRGRPYPPQKKTPGKNSDECIIL</sequence>
<evidence type="ECO:0000250" key="1">
    <source>
        <dbReference type="UniProtKB" id="Q9LZF1"/>
    </source>
</evidence>
<evidence type="ECO:0000250" key="2">
    <source>
        <dbReference type="UniProtKB" id="Q9SZN7"/>
    </source>
</evidence>
<evidence type="ECO:0000255" key="3">
    <source>
        <dbReference type="PROSITE-ProRule" id="PRU00280"/>
    </source>
</evidence>
<evidence type="ECO:0000256" key="4">
    <source>
        <dbReference type="SAM" id="MobiDB-lite"/>
    </source>
</evidence>
<evidence type="ECO:0000303" key="5">
    <source>
    </source>
</evidence>
<evidence type="ECO:0000303" key="6">
    <source>
    </source>
</evidence>
<evidence type="ECO:0000305" key="7"/>
<evidence type="ECO:0000305" key="8">
    <source>
    </source>
</evidence>
<evidence type="ECO:0000312" key="9">
    <source>
        <dbReference type="Araport" id="AT5G52720"/>
    </source>
</evidence>
<evidence type="ECO:0000312" key="10">
    <source>
        <dbReference type="EMBL" id="BAA98090.1"/>
    </source>
</evidence>
<evidence type="ECO:0000312" key="11">
    <source>
        <dbReference type="Proteomes" id="UP000006548"/>
    </source>
</evidence>
<proteinExistence type="inferred from homology"/>
<reference key="1">
    <citation type="submission" date="1999-04" db="EMBL/GenBank/DDBJ databases">
        <title>Structural analysis of Arabidopsis thaliana chromosome 5. XI.</title>
        <authorList>
            <person name="Kaneko T."/>
            <person name="Katoh T."/>
            <person name="Asamizu E."/>
            <person name="Sato S."/>
            <person name="Nakamura Y."/>
            <person name="Kotani H."/>
            <person name="Tabata S."/>
        </authorList>
    </citation>
    <scope>NUCLEOTIDE SEQUENCE [LARGE SCALE GENOMIC DNA]</scope>
    <source>
        <strain>cv. Columbia</strain>
    </source>
</reference>
<reference key="2">
    <citation type="journal article" date="2017" name="Plant J.">
        <title>Araport11: a complete reannotation of the Arabidopsis thaliana reference genome.</title>
        <authorList>
            <person name="Cheng C.Y."/>
            <person name="Krishnakumar V."/>
            <person name="Chan A.P."/>
            <person name="Thibaud-Nissen F."/>
            <person name="Schobel S."/>
            <person name="Town C.D."/>
        </authorList>
    </citation>
    <scope>GENOME REANNOTATION</scope>
    <source>
        <strain>cv. Columbia</strain>
    </source>
</reference>
<reference key="3">
    <citation type="journal article" date="2010" name="Metallomics">
        <title>Metallochaperone-like genes in Arabidopsis thaliana.</title>
        <authorList>
            <person name="Tehseen M."/>
            <person name="Cairns N."/>
            <person name="Sherson S."/>
            <person name="Cobbett C.S."/>
        </authorList>
    </citation>
    <scope>GENE FAMILY</scope>
    <scope>NOMENCLATURE</scope>
</reference>
<reference key="4">
    <citation type="journal article" date="2013" name="FEBS J.">
        <title>Heavy metal-associated isoprenylated plant protein (HIPP): characterization of a family of proteins exclusive to plants.</title>
        <authorList>
            <person name="de Abreu-Neto J.B."/>
            <person name="Turchetto-Zolet A.C."/>
            <person name="de Oliveira L.F."/>
            <person name="Zanettini M.H."/>
            <person name="Margis-Pinheiro M."/>
        </authorList>
    </citation>
    <scope>GENE FAMILY</scope>
    <scope>NOMENCLATURE</scope>
</reference>
<name>HIP10_ARATH</name>
<feature type="chain" id="PRO_0000437809" description="Heavy metal-associated isoprenylated plant protein 10">
    <location>
        <begin position="1"/>
        <end position="108"/>
    </location>
</feature>
<feature type="propeptide" id="PRO_0000437810" description="Removed in mature form" evidence="7">
    <location>
        <begin position="109"/>
        <end position="111"/>
    </location>
</feature>
<feature type="domain" description="HMA" evidence="3">
    <location>
        <begin position="1"/>
        <end position="68"/>
    </location>
</feature>
<feature type="region of interest" description="Disordered" evidence="4">
    <location>
        <begin position="68"/>
        <end position="111"/>
    </location>
</feature>
<feature type="modified residue" description="Cysteine methyl ester" evidence="2">
    <location>
        <position position="108"/>
    </location>
</feature>
<feature type="lipid moiety-binding region" description="S-farnesyl cysteine" evidence="2">
    <location>
        <position position="108"/>
    </location>
</feature>
<comment type="function">
    <text evidence="1">Probable heavy-metal-binding protein.</text>
</comment>
<comment type="similarity">
    <text evidence="7">Belongs to the HIPP family.</text>
</comment>
<comment type="caution">
    <text evidence="8">Contains an apparent HMA-like domain but lacks the core conserved Cys-X-X-Cys motif.</text>
</comment>
<comment type="sequence caution" evidence="7">
    <conflict type="erroneous gene model prediction">
        <sequence resource="EMBL-CDS" id="BAA98090"/>
    </conflict>
</comment>
<protein>
    <recommendedName>
        <fullName evidence="5 6">Heavy metal-associated isoprenylated plant protein 10</fullName>
        <shortName evidence="5 6">AtHIP10</shortName>
    </recommendedName>
</protein>
<gene>
    <name evidence="5 6" type="primary">HIPP10</name>
    <name evidence="9" type="ordered locus">At5g52720</name>
    <name evidence="10" type="ORF">F6N7.21</name>
</gene>